<dbReference type="EC" id="3.1.1.96" evidence="1"/>
<dbReference type="EMBL" id="FM200053">
    <property type="protein sequence ID" value="CAR61879.1"/>
    <property type="molecule type" value="Genomic_DNA"/>
</dbReference>
<dbReference type="RefSeq" id="WP_000560954.1">
    <property type="nucleotide sequence ID" value="NC_011147.1"/>
</dbReference>
<dbReference type="SMR" id="B5BJ27"/>
<dbReference type="KEGG" id="sek:SSPA3598"/>
<dbReference type="HOGENOM" id="CLU_076901_1_0_6"/>
<dbReference type="Proteomes" id="UP000001869">
    <property type="component" value="Chromosome"/>
</dbReference>
<dbReference type="GO" id="GO:0005737">
    <property type="term" value="C:cytoplasm"/>
    <property type="evidence" value="ECO:0007669"/>
    <property type="project" value="UniProtKB-SubCell"/>
</dbReference>
<dbReference type="GO" id="GO:0051500">
    <property type="term" value="F:D-tyrosyl-tRNA(Tyr) deacylase activity"/>
    <property type="evidence" value="ECO:0007669"/>
    <property type="project" value="TreeGrafter"/>
</dbReference>
<dbReference type="GO" id="GO:0106026">
    <property type="term" value="F:Gly-tRNA(Ala) deacylase activity"/>
    <property type="evidence" value="ECO:0007669"/>
    <property type="project" value="UniProtKB-UniRule"/>
</dbReference>
<dbReference type="GO" id="GO:0043908">
    <property type="term" value="F:Ser(Gly)-tRNA(Ala) hydrolase activity"/>
    <property type="evidence" value="ECO:0007669"/>
    <property type="project" value="UniProtKB-UniRule"/>
</dbReference>
<dbReference type="GO" id="GO:0000049">
    <property type="term" value="F:tRNA binding"/>
    <property type="evidence" value="ECO:0007669"/>
    <property type="project" value="UniProtKB-UniRule"/>
</dbReference>
<dbReference type="GO" id="GO:0019478">
    <property type="term" value="P:D-amino acid catabolic process"/>
    <property type="evidence" value="ECO:0007669"/>
    <property type="project" value="UniProtKB-UniRule"/>
</dbReference>
<dbReference type="CDD" id="cd00563">
    <property type="entry name" value="Dtyr_deacylase"/>
    <property type="match status" value="1"/>
</dbReference>
<dbReference type="FunFam" id="3.50.80.10:FF:000001">
    <property type="entry name" value="D-aminoacyl-tRNA deacylase"/>
    <property type="match status" value="1"/>
</dbReference>
<dbReference type="Gene3D" id="3.50.80.10">
    <property type="entry name" value="D-tyrosyl-tRNA(Tyr) deacylase"/>
    <property type="match status" value="1"/>
</dbReference>
<dbReference type="HAMAP" id="MF_00518">
    <property type="entry name" value="Deacylase_Dtd"/>
    <property type="match status" value="1"/>
</dbReference>
<dbReference type="InterPro" id="IPR003732">
    <property type="entry name" value="Daa-tRNA_deacyls_DTD"/>
</dbReference>
<dbReference type="InterPro" id="IPR023509">
    <property type="entry name" value="DTD-like_sf"/>
</dbReference>
<dbReference type="NCBIfam" id="TIGR00256">
    <property type="entry name" value="D-aminoacyl-tRNA deacylase"/>
    <property type="match status" value="1"/>
</dbReference>
<dbReference type="PANTHER" id="PTHR10472:SF5">
    <property type="entry name" value="D-AMINOACYL-TRNA DEACYLASE 1"/>
    <property type="match status" value="1"/>
</dbReference>
<dbReference type="PANTHER" id="PTHR10472">
    <property type="entry name" value="D-TYROSYL-TRNA TYR DEACYLASE"/>
    <property type="match status" value="1"/>
</dbReference>
<dbReference type="Pfam" id="PF02580">
    <property type="entry name" value="Tyr_Deacylase"/>
    <property type="match status" value="1"/>
</dbReference>
<dbReference type="SUPFAM" id="SSF69500">
    <property type="entry name" value="DTD-like"/>
    <property type="match status" value="1"/>
</dbReference>
<organism>
    <name type="scientific">Salmonella paratyphi A (strain AKU_12601)</name>
    <dbReference type="NCBI Taxonomy" id="554290"/>
    <lineage>
        <taxon>Bacteria</taxon>
        <taxon>Pseudomonadati</taxon>
        <taxon>Pseudomonadota</taxon>
        <taxon>Gammaproteobacteria</taxon>
        <taxon>Enterobacterales</taxon>
        <taxon>Enterobacteriaceae</taxon>
        <taxon>Salmonella</taxon>
    </lineage>
</organism>
<accession>B5BJ27</accession>
<evidence type="ECO:0000255" key="1">
    <source>
        <dbReference type="HAMAP-Rule" id="MF_00518"/>
    </source>
</evidence>
<reference key="1">
    <citation type="journal article" date="2009" name="BMC Genomics">
        <title>Pseudogene accumulation in the evolutionary histories of Salmonella enterica serovars Paratyphi A and Typhi.</title>
        <authorList>
            <person name="Holt K.E."/>
            <person name="Thomson N.R."/>
            <person name="Wain J."/>
            <person name="Langridge G.C."/>
            <person name="Hasan R."/>
            <person name="Bhutta Z.A."/>
            <person name="Quail M.A."/>
            <person name="Norbertczak H."/>
            <person name="Walker D."/>
            <person name="Simmonds M."/>
            <person name="White B."/>
            <person name="Bason N."/>
            <person name="Mungall K."/>
            <person name="Dougan G."/>
            <person name="Parkhill J."/>
        </authorList>
    </citation>
    <scope>NUCLEOTIDE SEQUENCE [LARGE SCALE GENOMIC DNA]</scope>
    <source>
        <strain>AKU_12601</strain>
    </source>
</reference>
<feature type="chain" id="PRO_1000127571" description="D-aminoacyl-tRNA deacylase">
    <location>
        <begin position="1"/>
        <end position="145"/>
    </location>
</feature>
<feature type="short sequence motif" description="Gly-cisPro motif, important for rejection of L-amino acids" evidence="1">
    <location>
        <begin position="137"/>
        <end position="138"/>
    </location>
</feature>
<comment type="function">
    <text evidence="1">An aminoacyl-tRNA editing enzyme that deacylates mischarged D-aminoacyl-tRNAs. Also deacylates mischarged glycyl-tRNA(Ala), protecting cells against glycine mischarging by AlaRS. Acts via tRNA-based rather than protein-based catalysis; rejects L-amino acids rather than detecting D-amino acids in the active site. By recycling D-aminoacyl-tRNA to D-amino acids and free tRNA molecules, this enzyme counteracts the toxicity associated with the formation of D-aminoacyl-tRNA entities in vivo and helps enforce protein L-homochirality.</text>
</comment>
<comment type="catalytic activity">
    <reaction evidence="1">
        <text>glycyl-tRNA(Ala) + H2O = tRNA(Ala) + glycine + H(+)</text>
        <dbReference type="Rhea" id="RHEA:53744"/>
        <dbReference type="Rhea" id="RHEA-COMP:9657"/>
        <dbReference type="Rhea" id="RHEA-COMP:13640"/>
        <dbReference type="ChEBI" id="CHEBI:15377"/>
        <dbReference type="ChEBI" id="CHEBI:15378"/>
        <dbReference type="ChEBI" id="CHEBI:57305"/>
        <dbReference type="ChEBI" id="CHEBI:78442"/>
        <dbReference type="ChEBI" id="CHEBI:78522"/>
        <dbReference type="EC" id="3.1.1.96"/>
    </reaction>
</comment>
<comment type="catalytic activity">
    <reaction evidence="1">
        <text>a D-aminoacyl-tRNA + H2O = a tRNA + a D-alpha-amino acid + H(+)</text>
        <dbReference type="Rhea" id="RHEA:13953"/>
        <dbReference type="Rhea" id="RHEA-COMP:10123"/>
        <dbReference type="Rhea" id="RHEA-COMP:10124"/>
        <dbReference type="ChEBI" id="CHEBI:15377"/>
        <dbReference type="ChEBI" id="CHEBI:15378"/>
        <dbReference type="ChEBI" id="CHEBI:59871"/>
        <dbReference type="ChEBI" id="CHEBI:78442"/>
        <dbReference type="ChEBI" id="CHEBI:79333"/>
        <dbReference type="EC" id="3.1.1.96"/>
    </reaction>
</comment>
<comment type="subunit">
    <text evidence="1">Homodimer.</text>
</comment>
<comment type="subcellular location">
    <subcellularLocation>
        <location evidence="1">Cytoplasm</location>
    </subcellularLocation>
</comment>
<comment type="domain">
    <text evidence="1">A Gly-cisPro motif from one monomer fits into the active site of the other monomer to allow specific chiral rejection of L-amino acids.</text>
</comment>
<comment type="similarity">
    <text evidence="1">Belongs to the DTD family.</text>
</comment>
<gene>
    <name evidence="1" type="primary">dtd</name>
    <name type="ordered locus">SSPA3598</name>
</gene>
<name>DTD_SALPK</name>
<protein>
    <recommendedName>
        <fullName evidence="1">D-aminoacyl-tRNA deacylase</fullName>
        <shortName evidence="1">DTD</shortName>
        <ecNumber evidence="1">3.1.1.96</ecNumber>
    </recommendedName>
    <alternativeName>
        <fullName evidence="1">Gly-tRNA(Ala) deacylase</fullName>
    </alternativeName>
</protein>
<proteinExistence type="inferred from homology"/>
<sequence length="145" mass="15898">MIALIQRATRASVTVEDEVTGEIGPGLLVLLGVEKEDDEQKANRLCERVLGYRIFSDADGKMNLNVQQAGGSVLVVSQFTLAADTERGMRPSFSGGAAPDRAQALYEYFVERCRQQAINTQTGRFAADMQVELVNDGPVTFWLQV</sequence>
<keyword id="KW-0963">Cytoplasm</keyword>
<keyword id="KW-0378">Hydrolase</keyword>
<keyword id="KW-0694">RNA-binding</keyword>
<keyword id="KW-0820">tRNA-binding</keyword>